<keyword id="KW-0963">Cytoplasm</keyword>
<keyword id="KW-0238">DNA-binding</keyword>
<keyword id="KW-1185">Reference proteome</keyword>
<organism>
    <name type="scientific">Erwinia tasmaniensis (strain DSM 17950 / CFBP 7177 / CIP 109463 / NCPPB 4357 / Et1/99)</name>
    <dbReference type="NCBI Taxonomy" id="465817"/>
    <lineage>
        <taxon>Bacteria</taxon>
        <taxon>Pseudomonadati</taxon>
        <taxon>Pseudomonadota</taxon>
        <taxon>Gammaproteobacteria</taxon>
        <taxon>Enterobacterales</taxon>
        <taxon>Erwiniaceae</taxon>
        <taxon>Erwinia</taxon>
    </lineage>
</organism>
<dbReference type="EMBL" id="CU468135">
    <property type="protein sequence ID" value="CAO97519.1"/>
    <property type="molecule type" value="Genomic_DNA"/>
</dbReference>
<dbReference type="RefSeq" id="WP_012442185.1">
    <property type="nucleotide sequence ID" value="NC_010694.1"/>
</dbReference>
<dbReference type="SMR" id="B2VCL7"/>
<dbReference type="STRING" id="465817.ETA_24730"/>
<dbReference type="KEGG" id="eta:ETA_24730"/>
<dbReference type="eggNOG" id="COG0718">
    <property type="taxonomic scope" value="Bacteria"/>
</dbReference>
<dbReference type="HOGENOM" id="CLU_140930_0_0_6"/>
<dbReference type="OrthoDB" id="9808738at2"/>
<dbReference type="Proteomes" id="UP000001726">
    <property type="component" value="Chromosome"/>
</dbReference>
<dbReference type="GO" id="GO:0043590">
    <property type="term" value="C:bacterial nucleoid"/>
    <property type="evidence" value="ECO:0007669"/>
    <property type="project" value="UniProtKB-UniRule"/>
</dbReference>
<dbReference type="GO" id="GO:0005829">
    <property type="term" value="C:cytosol"/>
    <property type="evidence" value="ECO:0007669"/>
    <property type="project" value="TreeGrafter"/>
</dbReference>
<dbReference type="GO" id="GO:0003677">
    <property type="term" value="F:DNA binding"/>
    <property type="evidence" value="ECO:0007669"/>
    <property type="project" value="UniProtKB-UniRule"/>
</dbReference>
<dbReference type="FunFam" id="3.30.1310.10:FF:000001">
    <property type="entry name" value="Nucleoid-associated protein YbaB"/>
    <property type="match status" value="1"/>
</dbReference>
<dbReference type="Gene3D" id="3.30.1310.10">
    <property type="entry name" value="Nucleoid-associated protein YbaB-like domain"/>
    <property type="match status" value="1"/>
</dbReference>
<dbReference type="HAMAP" id="MF_00274">
    <property type="entry name" value="DNA_YbaB_EbfC"/>
    <property type="match status" value="1"/>
</dbReference>
<dbReference type="InterPro" id="IPR036894">
    <property type="entry name" value="YbaB-like_sf"/>
</dbReference>
<dbReference type="InterPro" id="IPR004401">
    <property type="entry name" value="YbaB/EbfC"/>
</dbReference>
<dbReference type="NCBIfam" id="TIGR00103">
    <property type="entry name" value="DNA_YbaB_EbfC"/>
    <property type="match status" value="1"/>
</dbReference>
<dbReference type="PANTHER" id="PTHR33449">
    <property type="entry name" value="NUCLEOID-ASSOCIATED PROTEIN YBAB"/>
    <property type="match status" value="1"/>
</dbReference>
<dbReference type="PANTHER" id="PTHR33449:SF1">
    <property type="entry name" value="NUCLEOID-ASSOCIATED PROTEIN YBAB"/>
    <property type="match status" value="1"/>
</dbReference>
<dbReference type="Pfam" id="PF02575">
    <property type="entry name" value="YbaB_DNA_bd"/>
    <property type="match status" value="1"/>
</dbReference>
<dbReference type="PIRSF" id="PIRSF004555">
    <property type="entry name" value="UCP004555"/>
    <property type="match status" value="1"/>
</dbReference>
<dbReference type="SUPFAM" id="SSF82607">
    <property type="entry name" value="YbaB-like"/>
    <property type="match status" value="1"/>
</dbReference>
<comment type="function">
    <text evidence="1">Binds to DNA and alters its conformation. May be involved in regulation of gene expression, nucleoid organization and DNA protection.</text>
</comment>
<comment type="subunit">
    <text evidence="1">Homodimer.</text>
</comment>
<comment type="subcellular location">
    <subcellularLocation>
        <location evidence="1">Cytoplasm</location>
        <location evidence="1">Nucleoid</location>
    </subcellularLocation>
</comment>
<comment type="similarity">
    <text evidence="1">Belongs to the YbaB/EbfC family.</text>
</comment>
<reference key="1">
    <citation type="journal article" date="2008" name="Environ. Microbiol.">
        <title>The genome of Erwinia tasmaniensis strain Et1/99, a non-pathogenic bacterium in the genus Erwinia.</title>
        <authorList>
            <person name="Kube M."/>
            <person name="Migdoll A.M."/>
            <person name="Mueller I."/>
            <person name="Kuhl H."/>
            <person name="Beck A."/>
            <person name="Reinhardt R."/>
            <person name="Geider K."/>
        </authorList>
    </citation>
    <scope>NUCLEOTIDE SEQUENCE [LARGE SCALE GENOMIC DNA]</scope>
    <source>
        <strain>DSM 17950 / CFBP 7177 / CIP 109463 / NCPPB 4357 / Et1/99</strain>
    </source>
</reference>
<accession>B2VCL7</accession>
<gene>
    <name type="ordered locus">ETA_24730</name>
</gene>
<evidence type="ECO:0000255" key="1">
    <source>
        <dbReference type="HAMAP-Rule" id="MF_00274"/>
    </source>
</evidence>
<protein>
    <recommendedName>
        <fullName evidence="1">Nucleoid-associated protein ETA_24730</fullName>
    </recommendedName>
</protein>
<proteinExistence type="inferred from homology"/>
<name>Y2473_ERWT9</name>
<feature type="chain" id="PRO_1000119323" description="Nucleoid-associated protein ETA_24730">
    <location>
        <begin position="1"/>
        <end position="109"/>
    </location>
</feature>
<sequence length="109" mass="11804">MFGKAGLGNLMKQAQQMQEKMAQVQEEIAEMEVTGESGAGLVKVTINGAHSCRRVEVDPSLLEDDKDMLEDLVAAAFNDAARRISEAQKDKMASVSNGMSLPPGFKMPF</sequence>